<comment type="subcellular location">
    <subcellularLocation>
        <location evidence="1">Secreted</location>
        <location evidence="1">Extracellular space</location>
        <location evidence="1">Extracellular matrix</location>
    </subcellularLocation>
</comment>
<comment type="similarity">
    <text evidence="1">Belongs to the fibrillar collagen family.</text>
</comment>
<name>CO1A2_EPICA</name>
<organism evidence="3">
    <name type="scientific">Epinephelus caninus</name>
    <name type="common">Dogtooth grouper</name>
    <name type="synonym">Serranus caninus</name>
    <dbReference type="NCBI Taxonomy" id="179534"/>
    <lineage>
        <taxon>Eukaryota</taxon>
        <taxon>Metazoa</taxon>
        <taxon>Chordata</taxon>
        <taxon>Craniata</taxon>
        <taxon>Vertebrata</taxon>
        <taxon>Euteleostomi</taxon>
        <taxon>Actinopterygii</taxon>
        <taxon>Neopterygii</taxon>
        <taxon>Teleostei</taxon>
        <taxon>Neoteleostei</taxon>
        <taxon>Acanthomorphata</taxon>
        <taxon>Eupercaria</taxon>
        <taxon>Perciformes</taxon>
        <taxon>Serranoidei</taxon>
        <taxon>Serranidae</taxon>
        <taxon>Epinephelinae</taxon>
        <taxon>Epinephelini</taxon>
        <taxon>Epinephelus</taxon>
    </lineage>
</organism>
<reference evidence="4" key="1">
    <citation type="submission" date="2023-05" db="UniProtKB">
        <title>Grouping groupers in the Mediterranean: ecological baselines revealed by ancient proteins.</title>
        <authorList>
            <person name="Winter R.M."/>
            <person name="de Kock W."/>
            <person name="Mackie M."/>
            <person name="Ramsoe M."/>
            <person name="Desidera E."/>
            <person name="Collins M."/>
            <person name="Guidetti P."/>
            <person name="Presslee S."/>
            <person name="Munoz-Alegre M."/>
            <person name="Oueslati T."/>
            <person name="Morales-Muniz A."/>
            <person name="Michailidis D."/>
            <person name="van den Hurk Y."/>
            <person name="Cakirlar C."/>
        </authorList>
    </citation>
    <scope>PROTEIN SEQUENCE</scope>
    <scope>IDENTIFICATION BY MASS SPECTROMETRY</scope>
    <source>
        <tissue evidence="3">Bone</tissue>
    </source>
</reference>
<dbReference type="GO" id="GO:0005581">
    <property type="term" value="C:collagen trimer"/>
    <property type="evidence" value="ECO:0007669"/>
    <property type="project" value="UniProtKB-KW"/>
</dbReference>
<dbReference type="GO" id="GO:0005576">
    <property type="term" value="C:extracellular region"/>
    <property type="evidence" value="ECO:0007669"/>
    <property type="project" value="UniProtKB-KW"/>
</dbReference>
<dbReference type="GO" id="GO:0005201">
    <property type="term" value="F:extracellular matrix structural constituent"/>
    <property type="evidence" value="ECO:0007669"/>
    <property type="project" value="InterPro"/>
</dbReference>
<dbReference type="Gene3D" id="2.60.120.1000">
    <property type="match status" value="1"/>
</dbReference>
<dbReference type="InterPro" id="IPR008160">
    <property type="entry name" value="Collagen"/>
</dbReference>
<dbReference type="InterPro" id="IPR050938">
    <property type="entry name" value="Collagen_Structural_Proteins"/>
</dbReference>
<dbReference type="InterPro" id="IPR000885">
    <property type="entry name" value="Fib_collagen_C"/>
</dbReference>
<dbReference type="PANTHER" id="PTHR37456:SF6">
    <property type="entry name" value="COLLAGEN ALPHA-1(XXIII) CHAIN-LIKE ISOFORM X2"/>
    <property type="match status" value="1"/>
</dbReference>
<dbReference type="PANTHER" id="PTHR37456">
    <property type="entry name" value="SI:CH211-266K2.1"/>
    <property type="match status" value="1"/>
</dbReference>
<dbReference type="Pfam" id="PF01410">
    <property type="entry name" value="COLFI"/>
    <property type="match status" value="2"/>
</dbReference>
<dbReference type="Pfam" id="PF01391">
    <property type="entry name" value="Collagen"/>
    <property type="match status" value="2"/>
</dbReference>
<dbReference type="SMART" id="SM00038">
    <property type="entry name" value="COLFI"/>
    <property type="match status" value="1"/>
</dbReference>
<feature type="chain" id="PRO_0000459608" description="Collagen alpha-2(I) chain">
    <location>
        <begin position="1"/>
        <end position="1100"/>
    </location>
</feature>
<feature type="domain" description="Fibrillar collagen NC1" evidence="1">
    <location>
        <begin position="1071"/>
        <end position="1100"/>
    </location>
</feature>
<feature type="region of interest" description="Disordered" evidence="2">
    <location>
        <begin position="1"/>
        <end position="982"/>
    </location>
</feature>
<feature type="compositionally biased region" description="Low complexity" evidence="2">
    <location>
        <begin position="122"/>
        <end position="170"/>
    </location>
</feature>
<feature type="compositionally biased region" description="Low complexity" evidence="2">
    <location>
        <begin position="200"/>
        <end position="209"/>
    </location>
</feature>
<feature type="compositionally biased region" description="Low complexity" evidence="2">
    <location>
        <begin position="216"/>
        <end position="237"/>
    </location>
</feature>
<feature type="compositionally biased region" description="Pro residues" evidence="2">
    <location>
        <begin position="239"/>
        <end position="249"/>
    </location>
</feature>
<feature type="compositionally biased region" description="Low complexity" evidence="2">
    <location>
        <begin position="251"/>
        <end position="261"/>
    </location>
</feature>
<feature type="compositionally biased region" description="Gly residues" evidence="2">
    <location>
        <begin position="268"/>
        <end position="277"/>
    </location>
</feature>
<feature type="compositionally biased region" description="Low complexity" evidence="2">
    <location>
        <begin position="333"/>
        <end position="352"/>
    </location>
</feature>
<feature type="compositionally biased region" description="Low complexity" evidence="2">
    <location>
        <begin position="358"/>
        <end position="385"/>
    </location>
</feature>
<feature type="compositionally biased region" description="Low complexity" evidence="2">
    <location>
        <begin position="435"/>
        <end position="448"/>
    </location>
</feature>
<feature type="compositionally biased region" description="Low complexity" evidence="2">
    <location>
        <begin position="460"/>
        <end position="472"/>
    </location>
</feature>
<feature type="compositionally biased region" description="Gly residues" evidence="2">
    <location>
        <begin position="473"/>
        <end position="482"/>
    </location>
</feature>
<feature type="compositionally biased region" description="Low complexity" evidence="2">
    <location>
        <begin position="507"/>
        <end position="517"/>
    </location>
</feature>
<feature type="compositionally biased region" description="Gly residues" evidence="2">
    <location>
        <begin position="530"/>
        <end position="557"/>
    </location>
</feature>
<feature type="compositionally biased region" description="Basic and acidic residues" evidence="2">
    <location>
        <begin position="568"/>
        <end position="579"/>
    </location>
</feature>
<feature type="compositionally biased region" description="Low complexity" evidence="2">
    <location>
        <begin position="633"/>
        <end position="646"/>
    </location>
</feature>
<feature type="compositionally biased region" description="Gly residues" evidence="2">
    <location>
        <begin position="656"/>
        <end position="665"/>
    </location>
</feature>
<feature type="compositionally biased region" description="Low complexity" evidence="2">
    <location>
        <begin position="666"/>
        <end position="691"/>
    </location>
</feature>
<feature type="compositionally biased region" description="Low complexity" evidence="2">
    <location>
        <begin position="702"/>
        <end position="729"/>
    </location>
</feature>
<feature type="compositionally biased region" description="Low complexity" evidence="2">
    <location>
        <begin position="757"/>
        <end position="775"/>
    </location>
</feature>
<feature type="compositionally biased region" description="Gly residues" evidence="2">
    <location>
        <begin position="788"/>
        <end position="797"/>
    </location>
</feature>
<feature type="compositionally biased region" description="Low complexity" evidence="2">
    <location>
        <begin position="798"/>
        <end position="820"/>
    </location>
</feature>
<feature type="compositionally biased region" description="Low complexity" evidence="2">
    <location>
        <begin position="854"/>
        <end position="866"/>
    </location>
</feature>
<feature type="compositionally biased region" description="Gly residues" evidence="2">
    <location>
        <begin position="867"/>
        <end position="876"/>
    </location>
</feature>
<feature type="compositionally biased region" description="Low complexity" evidence="2">
    <location>
        <begin position="877"/>
        <end position="892"/>
    </location>
</feature>
<feature type="compositionally biased region" description="Basic and acidic residues" evidence="2">
    <location>
        <begin position="893"/>
        <end position="907"/>
    </location>
</feature>
<feature type="compositionally biased region" description="Low complexity" evidence="2">
    <location>
        <begin position="916"/>
        <end position="935"/>
    </location>
</feature>
<feature type="non-consecutive residues" evidence="3">
    <location>
        <begin position="138"/>
        <end position="139"/>
    </location>
</feature>
<feature type="non-consecutive residues" evidence="3">
    <location>
        <begin position="315"/>
        <end position="316"/>
    </location>
</feature>
<feature type="non-consecutive residues" evidence="3">
    <location>
        <begin position="760"/>
        <end position="761"/>
    </location>
</feature>
<feature type="non-consecutive residues" evidence="3">
    <location>
        <begin position="853"/>
        <end position="854"/>
    </location>
</feature>
<feature type="non-consecutive residues" evidence="3">
    <location>
        <begin position="968"/>
        <end position="969"/>
    </location>
</feature>
<feature type="non-consecutive residues" evidence="3">
    <location>
        <begin position="990"/>
        <end position="991"/>
    </location>
</feature>
<feature type="non-consecutive residues" evidence="3">
    <location>
        <begin position="1022"/>
        <end position="1023"/>
    </location>
</feature>
<feature type="non-consecutive residues" evidence="3">
    <location>
        <begin position="1033"/>
        <end position="1034"/>
    </location>
</feature>
<feature type="non-consecutive residues" evidence="3">
    <location>
        <begin position="1054"/>
        <end position="1055"/>
    </location>
</feature>
<feature type="non-consecutive residues" evidence="3">
    <location>
        <begin position="1072"/>
        <end position="1073"/>
    </location>
</feature>
<feature type="non-terminal residue" evidence="3">
    <location>
        <position position="1"/>
    </location>
</feature>
<protein>
    <recommendedName>
        <fullName evidence="4">Collagen alpha-2(I) chain</fullName>
        <shortName evidence="4">col1a2</shortName>
    </recommendedName>
    <alternativeName>
        <fullName evidence="4">Alpha-2 type I collagen</fullName>
    </alternativeName>
</protein>
<proteinExistence type="evidence at protein level"/>
<keyword id="KW-0176">Collagen</keyword>
<keyword id="KW-0903">Direct protein sequencing</keyword>
<keyword id="KW-0272">Extracellular matrix</keyword>
<keyword id="KW-0964">Secreted</keyword>
<accession>C0HM94</accession>
<evidence type="ECO:0000255" key="1">
    <source>
        <dbReference type="PROSITE-ProRule" id="PRU00793"/>
    </source>
</evidence>
<evidence type="ECO:0000256" key="2">
    <source>
        <dbReference type="SAM" id="MobiDB-lite"/>
    </source>
</evidence>
<evidence type="ECO:0000303" key="3">
    <source ref="1"/>
</evidence>
<evidence type="ECO:0000305" key="4"/>
<sequence length="1100" mass="100302">QYDGVKAPDPGPGPMGMMGARGPPGPPGPPGAQGHTGHPGEPGEPGQTGPLGPRGPPGPPGKSGEDGNNGRPGKPGDRGAPGPQGARGFPGTPGLPGMKGHRGYTGLDGRKGEPGGAGAKGEPGAHGAAGSPGLAGSRGRAGPAGPAGARGADGNAGPAGPAGPLGAAGPPGFPGGPGPKGELGPAGATGPSGAQGSRGEPGPNGAVGPVGPPGNPGNNGLNGAKGAAGTPGVAGAPGFPGPRGGPGPQGPQGAAGQRGLAGDPGTQGVKGDGGPKGEPGNSGPQGPPGPQGEEGKRGPTGELGATGPAGNRGARPGSRGMPGSEGRTGPLGMPGARGASGAAGPRGPPGDAGRAGESGPAGLRGLPGSPGSSGPPGKEGAAGPAGQDGRGGPPGPTGPRGQPGNLGFPGPKGPSGEAGKPGDKGATGPTGLRGAPGPDGNNGATGATGPAGGPGEKGEQGASGAPGFQGLPGPAGGAGEAGKPGDRGLPGDQGVSGPAGAKGERGNPGAAGASGPQGPLGPRGPAGAPGTDGGKGEPGAAGAAGGPGHQGPGGMPGERGAAGPPGGKGEKGEGGHRGPDGNAGRDGSRGMPGPAGPPGPTGANGDKGESGAFGPAGPAGVRGASGERGEVGPAGAPGFAGPPGADGQTGARGERGPSGGKGESGPSGPAGPAGQSGPPGASGPAGPTGARGDNGPPGLTGFPGAAGRVGAAGPAGLVGPPGAAGPAGKDGPRGLRGDPGPSGPSGDQGMVGPPGPSGEKGXPGTPGTSGPLGLQGFVGLPGARGDRGSPGGAGAVGEAGRVGPAGPAGARGAPGNLGLPGMTGPQGEAGREGNPGNDGPPGRPGAPGFKGDRAGPTGAAGRPGNRGESGPGGAAGAVGPAGARGAAGPSGPRGEKGVAGEKGERGMKGLRGHAGLQGMPGPSGPSGDTGSAGPNGPAGPRGPAGPHGPPGKDGRAGGHGTLGSPGARLPGPPGPAGGGYDVSGYDEYRAAKDYEVDATIKSLNTQLENLLTPEGSRKNPARLSHPEWSSGFYVFCDFNTRETCLHAHPGSLARAEGNSRFTFSVLEDGCTRLPLLDLAPLDLGGADQEFGLDLGPVCFK</sequence>